<feature type="chain" id="PRO_0000187636" description="Uroporphyrinogen decarboxylase">
    <location>
        <begin position="1"/>
        <end position="354"/>
    </location>
</feature>
<feature type="binding site" evidence="1">
    <location>
        <begin position="27"/>
        <end position="31"/>
    </location>
    <ligand>
        <name>substrate</name>
    </ligand>
</feature>
<feature type="binding site" evidence="1">
    <location>
        <position position="46"/>
    </location>
    <ligand>
        <name>substrate</name>
    </ligand>
</feature>
<feature type="binding site" evidence="1">
    <location>
        <position position="77"/>
    </location>
    <ligand>
        <name>substrate</name>
    </ligand>
</feature>
<feature type="binding site" evidence="1">
    <location>
        <position position="154"/>
    </location>
    <ligand>
        <name>substrate</name>
    </ligand>
</feature>
<feature type="binding site" evidence="1">
    <location>
        <position position="209"/>
    </location>
    <ligand>
        <name>substrate</name>
    </ligand>
</feature>
<feature type="binding site" evidence="1">
    <location>
        <position position="327"/>
    </location>
    <ligand>
        <name>substrate</name>
    </ligand>
</feature>
<feature type="site" description="Transition state stabilizer" evidence="1">
    <location>
        <position position="77"/>
    </location>
</feature>
<protein>
    <recommendedName>
        <fullName evidence="1">Uroporphyrinogen decarboxylase</fullName>
        <shortName evidence="1">UPD</shortName>
        <shortName evidence="1">URO-D</shortName>
        <ecNumber evidence="1">4.1.1.37</ecNumber>
    </recommendedName>
</protein>
<organism>
    <name type="scientific">Salmonella typhimurium (strain LT2 / SGSC1412 / ATCC 700720)</name>
    <dbReference type="NCBI Taxonomy" id="99287"/>
    <lineage>
        <taxon>Bacteria</taxon>
        <taxon>Pseudomonadati</taxon>
        <taxon>Pseudomonadota</taxon>
        <taxon>Gammaproteobacteria</taxon>
        <taxon>Enterobacterales</taxon>
        <taxon>Enterobacteriaceae</taxon>
        <taxon>Salmonella</taxon>
    </lineage>
</organism>
<proteinExistence type="inferred from homology"/>
<dbReference type="EC" id="4.1.1.37" evidence="1"/>
<dbReference type="EMBL" id="AF170176">
    <property type="protein sequence ID" value="AAF33501.1"/>
    <property type="molecule type" value="Genomic_DNA"/>
</dbReference>
<dbReference type="EMBL" id="AE006468">
    <property type="protein sequence ID" value="AAL22995.1"/>
    <property type="molecule type" value="Genomic_DNA"/>
</dbReference>
<dbReference type="RefSeq" id="NP_463036.2">
    <property type="nucleotide sequence ID" value="NC_003197.2"/>
</dbReference>
<dbReference type="SMR" id="Q9L9I4"/>
<dbReference type="STRING" id="99287.STM4167"/>
<dbReference type="PaxDb" id="99287-STM4167"/>
<dbReference type="GeneID" id="1255693"/>
<dbReference type="KEGG" id="stm:STM4167"/>
<dbReference type="PATRIC" id="fig|99287.12.peg.4381"/>
<dbReference type="HOGENOM" id="CLU_040933_0_0_6"/>
<dbReference type="PhylomeDB" id="Q9L9I4"/>
<dbReference type="BioCyc" id="SENT99287:STM4167-MONOMER"/>
<dbReference type="UniPathway" id="UPA00251">
    <property type="reaction ID" value="UER00321"/>
</dbReference>
<dbReference type="Proteomes" id="UP000001014">
    <property type="component" value="Chromosome"/>
</dbReference>
<dbReference type="GO" id="GO:0005829">
    <property type="term" value="C:cytosol"/>
    <property type="evidence" value="ECO:0000318"/>
    <property type="project" value="GO_Central"/>
</dbReference>
<dbReference type="GO" id="GO:0004853">
    <property type="term" value="F:uroporphyrinogen decarboxylase activity"/>
    <property type="evidence" value="ECO:0000318"/>
    <property type="project" value="GO_Central"/>
</dbReference>
<dbReference type="GO" id="GO:0006783">
    <property type="term" value="P:heme biosynthetic process"/>
    <property type="evidence" value="ECO:0000318"/>
    <property type="project" value="GO_Central"/>
</dbReference>
<dbReference type="GO" id="GO:0019353">
    <property type="term" value="P:protoporphyrinogen IX biosynthetic process from glutamate"/>
    <property type="evidence" value="ECO:0000318"/>
    <property type="project" value="GO_Central"/>
</dbReference>
<dbReference type="CDD" id="cd00717">
    <property type="entry name" value="URO-D"/>
    <property type="match status" value="1"/>
</dbReference>
<dbReference type="FunFam" id="3.20.20.210:FF:000001">
    <property type="entry name" value="Uroporphyrinogen decarboxylase"/>
    <property type="match status" value="1"/>
</dbReference>
<dbReference type="Gene3D" id="3.20.20.210">
    <property type="match status" value="1"/>
</dbReference>
<dbReference type="HAMAP" id="MF_00218">
    <property type="entry name" value="URO_D"/>
    <property type="match status" value="1"/>
</dbReference>
<dbReference type="InterPro" id="IPR038071">
    <property type="entry name" value="UROD/MetE-like_sf"/>
</dbReference>
<dbReference type="InterPro" id="IPR006361">
    <property type="entry name" value="Uroporphyrinogen_deCO2ase_HemE"/>
</dbReference>
<dbReference type="InterPro" id="IPR000257">
    <property type="entry name" value="Uroporphyrinogen_deCOase"/>
</dbReference>
<dbReference type="NCBIfam" id="TIGR01464">
    <property type="entry name" value="hemE"/>
    <property type="match status" value="1"/>
</dbReference>
<dbReference type="PANTHER" id="PTHR21091">
    <property type="entry name" value="METHYLTETRAHYDROFOLATE:HOMOCYSTEINE METHYLTRANSFERASE RELATED"/>
    <property type="match status" value="1"/>
</dbReference>
<dbReference type="PANTHER" id="PTHR21091:SF169">
    <property type="entry name" value="UROPORPHYRINOGEN DECARBOXYLASE"/>
    <property type="match status" value="1"/>
</dbReference>
<dbReference type="Pfam" id="PF01208">
    <property type="entry name" value="URO-D"/>
    <property type="match status" value="1"/>
</dbReference>
<dbReference type="SUPFAM" id="SSF51726">
    <property type="entry name" value="UROD/MetE-like"/>
    <property type="match status" value="1"/>
</dbReference>
<dbReference type="PROSITE" id="PS00906">
    <property type="entry name" value="UROD_1"/>
    <property type="match status" value="1"/>
</dbReference>
<dbReference type="PROSITE" id="PS00907">
    <property type="entry name" value="UROD_2"/>
    <property type="match status" value="1"/>
</dbReference>
<evidence type="ECO:0000255" key="1">
    <source>
        <dbReference type="HAMAP-Rule" id="MF_00218"/>
    </source>
</evidence>
<name>DCUP_SALTY</name>
<comment type="function">
    <text evidence="1">Catalyzes the decarboxylation of four acetate groups of uroporphyrinogen-III to yield coproporphyrinogen-III.</text>
</comment>
<comment type="catalytic activity">
    <reaction evidence="1">
        <text>uroporphyrinogen III + 4 H(+) = coproporphyrinogen III + 4 CO2</text>
        <dbReference type="Rhea" id="RHEA:19865"/>
        <dbReference type="ChEBI" id="CHEBI:15378"/>
        <dbReference type="ChEBI" id="CHEBI:16526"/>
        <dbReference type="ChEBI" id="CHEBI:57308"/>
        <dbReference type="ChEBI" id="CHEBI:57309"/>
        <dbReference type="EC" id="4.1.1.37"/>
    </reaction>
</comment>
<comment type="pathway">
    <text evidence="1">Porphyrin-containing compound metabolism; protoporphyrin-IX biosynthesis; coproporphyrinogen-III from 5-aminolevulinate: step 4/4.</text>
</comment>
<comment type="subunit">
    <text evidence="1">Homodimer.</text>
</comment>
<comment type="subcellular location">
    <subcellularLocation>
        <location evidence="1">Cytoplasm</location>
    </subcellularLocation>
</comment>
<comment type="similarity">
    <text evidence="1">Belongs to the uroporphyrinogen decarboxylase family.</text>
</comment>
<sequence>MTELKNDRYLRALLRQPVDVTPVWMMRRAGRYLPEYKATRAQAGDFMSLCKNAELACEVTLQPLRRYPLDAAILFSDILTIPDAMGLGLYFEAGEGPRFTAPVTCKADVEKLPIPDPEGELGYVMNAVRTIRRELKGEVPLIGFSGSPWTLATYMVEGGSSKAFTVIKKMMYADPQALHLLLDKLAKSVTLYLNAQIKAGAQSVMIFDTWGGVLTGRDYQQFSLYYMHKIVDGLLRENDGRRVPVTLFTKGGGQWLEAMAETGCDALGLDWTTDIADARRRVGHKVALQGNMDPSMLYAPPARIEDEVATILAGFGQGEGHVFNLGHGIHQDVPPEHAGAFVEAVHRLSAQYHN</sequence>
<reference key="1">
    <citation type="journal article" date="2001" name="Nature">
        <title>Complete genome sequence of Salmonella enterica serovar Typhimurium LT2.</title>
        <authorList>
            <person name="McClelland M."/>
            <person name="Sanderson K.E."/>
            <person name="Spieth J."/>
            <person name="Clifton S.W."/>
            <person name="Latreille P."/>
            <person name="Courtney L."/>
            <person name="Porwollik S."/>
            <person name="Ali J."/>
            <person name="Dante M."/>
            <person name="Du F."/>
            <person name="Hou S."/>
            <person name="Layman D."/>
            <person name="Leonard S."/>
            <person name="Nguyen C."/>
            <person name="Scott K."/>
            <person name="Holmes A."/>
            <person name="Grewal N."/>
            <person name="Mulvaney E."/>
            <person name="Ryan E."/>
            <person name="Sun H."/>
            <person name="Florea L."/>
            <person name="Miller W."/>
            <person name="Stoneking T."/>
            <person name="Nhan M."/>
            <person name="Waterston R."/>
            <person name="Wilson R.K."/>
        </authorList>
    </citation>
    <scope>NUCLEOTIDE SEQUENCE [LARGE SCALE GENOMIC DNA]</scope>
    <source>
        <strain>LT2 / SGSC1412 / ATCC 700720</strain>
    </source>
</reference>
<accession>Q9L9I4</accession>
<gene>
    <name evidence="1" type="primary">hemE</name>
    <name type="ordered locus">STM4167</name>
    <name type="ORF">STMF1.21</name>
</gene>
<keyword id="KW-0963">Cytoplasm</keyword>
<keyword id="KW-0210">Decarboxylase</keyword>
<keyword id="KW-0456">Lyase</keyword>
<keyword id="KW-0627">Porphyrin biosynthesis</keyword>
<keyword id="KW-1185">Reference proteome</keyword>